<comment type="function">
    <text>Sequence-specific transcription factor which is part of a developmental regulatory system that provides cells with specific positional identities on the anterior-posterior axis.</text>
</comment>
<comment type="subcellular location">
    <subcellularLocation>
        <location>Nucleus</location>
    </subcellularLocation>
</comment>
<comment type="similarity">
    <text evidence="4">Belongs to the Abd-B homeobox family.</text>
</comment>
<name>HXC10_MOUSE</name>
<feature type="chain" id="PRO_0000200191" description="Homeobox protein Hox-C10">
    <location>
        <begin position="1"/>
        <end position="342"/>
    </location>
</feature>
<feature type="DNA-binding region" description="Homeobox" evidence="2">
    <location>
        <begin position="268"/>
        <end position="327"/>
    </location>
</feature>
<feature type="region of interest" description="Disordered" evidence="3">
    <location>
        <begin position="1"/>
        <end position="20"/>
    </location>
</feature>
<feature type="region of interest" description="Disordered" evidence="3">
    <location>
        <begin position="186"/>
        <end position="271"/>
    </location>
</feature>
<feature type="compositionally biased region" description="Polar residues" evidence="3">
    <location>
        <begin position="1"/>
        <end position="11"/>
    </location>
</feature>
<feature type="compositionally biased region" description="Polar residues" evidence="3">
    <location>
        <begin position="204"/>
        <end position="219"/>
    </location>
</feature>
<feature type="modified residue" description="Phosphothreonine" evidence="1">
    <location>
        <position position="8"/>
    </location>
</feature>
<feature type="modified residue" description="Phosphoserine" evidence="1">
    <location>
        <position position="189"/>
    </location>
</feature>
<feature type="cross-link" description="Glycyl lysine isopeptide (Lys-Gly) (interchain with G-Cter in SUMO2)" evidence="1">
    <location>
        <position position="106"/>
    </location>
</feature>
<feature type="cross-link" description="Glycyl lysine isopeptide (Lys-Gly) (interchain with G-Cter in SUMO2)" evidence="1">
    <location>
        <position position="195"/>
    </location>
</feature>
<feature type="cross-link" description="Glycyl lysine isopeptide (Lys-Gly) (interchain with G-Cter in SUMO2)" evidence="1">
    <location>
        <position position="254"/>
    </location>
</feature>
<feature type="sequence conflict" description="In Ref. 2; AAH53405." evidence="4" ref="2">
    <original>P</original>
    <variation>S</variation>
    <location>
        <position position="182"/>
    </location>
</feature>
<sequence>MTCPRNVTPNSYAEPLAAPGGGERYNRNAGMYMQSGSDFNCGVMRGCGLAPSLSKRDEGGSPNLALNTYPSYLSQLDSWGDPKAAYRLEQPVGRPLSSCSYPPSVKEENVCCMYSAEKRAKSGPEAALYSHPLPESCLGEHEVPVPSYYRASPSYSALDKTPHCAGANEFEAPFEQRASLNPRTEHLESPQLGGKVSFPETPKSDSQTPSPNEIKTEQSLAGPKASPSESEKERAKTADSSPDTSDNEAKEEIKAENTTGNWLTAKSGRKKRCPYTKHQTLELEKEFLFNMYLTRERRLEISKTINLTDRQVKIWFQNRRMKLKKMNRENRIRELTSNFNFT</sequence>
<protein>
    <recommendedName>
        <fullName>Homeobox protein Hox-C10</fullName>
    </recommendedName>
    <alternativeName>
        <fullName>Homeobox protein Hox-3.6</fullName>
    </alternativeName>
</protein>
<keyword id="KW-0217">Developmental protein</keyword>
<keyword id="KW-0238">DNA-binding</keyword>
<keyword id="KW-0371">Homeobox</keyword>
<keyword id="KW-1017">Isopeptide bond</keyword>
<keyword id="KW-0539">Nucleus</keyword>
<keyword id="KW-0597">Phosphoprotein</keyword>
<keyword id="KW-1185">Reference proteome</keyword>
<keyword id="KW-0804">Transcription</keyword>
<keyword id="KW-0805">Transcription regulation</keyword>
<keyword id="KW-0832">Ubl conjugation</keyword>
<organism>
    <name type="scientific">Mus musculus</name>
    <name type="common">Mouse</name>
    <dbReference type="NCBI Taxonomy" id="10090"/>
    <lineage>
        <taxon>Eukaryota</taxon>
        <taxon>Metazoa</taxon>
        <taxon>Chordata</taxon>
        <taxon>Craniata</taxon>
        <taxon>Vertebrata</taxon>
        <taxon>Euteleostomi</taxon>
        <taxon>Mammalia</taxon>
        <taxon>Eutheria</taxon>
        <taxon>Euarchontoglires</taxon>
        <taxon>Glires</taxon>
        <taxon>Rodentia</taxon>
        <taxon>Myomorpha</taxon>
        <taxon>Muroidea</taxon>
        <taxon>Muridae</taxon>
        <taxon>Murinae</taxon>
        <taxon>Mus</taxon>
        <taxon>Mus</taxon>
    </lineage>
</organism>
<evidence type="ECO:0000250" key="1">
    <source>
        <dbReference type="UniProtKB" id="Q9NYD6"/>
    </source>
</evidence>
<evidence type="ECO:0000255" key="2">
    <source>
        <dbReference type="PROSITE-ProRule" id="PRU00108"/>
    </source>
</evidence>
<evidence type="ECO:0000256" key="3">
    <source>
        <dbReference type="SAM" id="MobiDB-lite"/>
    </source>
</evidence>
<evidence type="ECO:0000305" key="4"/>
<proteinExistence type="evidence at transcript level"/>
<dbReference type="EMBL" id="X63507">
    <property type="status" value="NOT_ANNOTATED_CDS"/>
    <property type="molecule type" value="Genomic_DNA"/>
</dbReference>
<dbReference type="EMBL" id="BC053405">
    <property type="protein sequence ID" value="AAH53405.1"/>
    <property type="molecule type" value="mRNA"/>
</dbReference>
<dbReference type="EMBL" id="M81658">
    <property type="protein sequence ID" value="AAA63310.1"/>
    <property type="molecule type" value="Genomic_DNA"/>
</dbReference>
<dbReference type="CCDS" id="CCDS57014.1"/>
<dbReference type="PIR" id="A56552">
    <property type="entry name" value="A56552"/>
</dbReference>
<dbReference type="RefSeq" id="NP_034592.2">
    <property type="nucleotide sequence ID" value="NM_010462.5"/>
</dbReference>
<dbReference type="SMR" id="P31257"/>
<dbReference type="BioGRID" id="229079">
    <property type="interactions" value="1"/>
</dbReference>
<dbReference type="FunCoup" id="P31257">
    <property type="interactions" value="1117"/>
</dbReference>
<dbReference type="STRING" id="10090.ENSMUSP00000001699"/>
<dbReference type="PhosphoSitePlus" id="P31257"/>
<dbReference type="jPOST" id="P31257"/>
<dbReference type="PaxDb" id="10090-ENSMUSP00000001699"/>
<dbReference type="ProteomicsDB" id="266931"/>
<dbReference type="Antibodypedia" id="15311">
    <property type="antibodies" value="447 antibodies from 33 providers"/>
</dbReference>
<dbReference type="DNASU" id="209448"/>
<dbReference type="Ensembl" id="ENSMUST00000001699.8">
    <property type="protein sequence ID" value="ENSMUSP00000001699.8"/>
    <property type="gene ID" value="ENSMUSG00000022484.8"/>
</dbReference>
<dbReference type="GeneID" id="209448"/>
<dbReference type="KEGG" id="mmu:209448"/>
<dbReference type="UCSC" id="uc007xwz.2">
    <property type="organism name" value="mouse"/>
</dbReference>
<dbReference type="AGR" id="MGI:96192"/>
<dbReference type="CTD" id="3226"/>
<dbReference type="MGI" id="MGI:96192">
    <property type="gene designation" value="Hoxc10"/>
</dbReference>
<dbReference type="VEuPathDB" id="HostDB:ENSMUSG00000022484"/>
<dbReference type="eggNOG" id="KOG0487">
    <property type="taxonomic scope" value="Eukaryota"/>
</dbReference>
<dbReference type="GeneTree" id="ENSGT00940000160855"/>
<dbReference type="HOGENOM" id="CLU_057871_0_0_1"/>
<dbReference type="InParanoid" id="P31257"/>
<dbReference type="OMA" id="MYMQSGN"/>
<dbReference type="OrthoDB" id="6159439at2759"/>
<dbReference type="PhylomeDB" id="P31257"/>
<dbReference type="TreeFam" id="TF317819"/>
<dbReference type="BioGRID-ORCS" id="209448">
    <property type="hits" value="0 hits in 80 CRISPR screens"/>
</dbReference>
<dbReference type="PRO" id="PR:P31257"/>
<dbReference type="Proteomes" id="UP000000589">
    <property type="component" value="Chromosome 15"/>
</dbReference>
<dbReference type="RNAct" id="P31257">
    <property type="molecule type" value="protein"/>
</dbReference>
<dbReference type="Bgee" id="ENSMUSG00000022484">
    <property type="expression patterns" value="Expressed in embryonic post-anal tail and 100 other cell types or tissues"/>
</dbReference>
<dbReference type="GO" id="GO:0016604">
    <property type="term" value="C:nuclear body"/>
    <property type="evidence" value="ECO:0007669"/>
    <property type="project" value="Ensembl"/>
</dbReference>
<dbReference type="GO" id="GO:0001228">
    <property type="term" value="F:DNA-binding transcription activator activity, RNA polymerase II-specific"/>
    <property type="evidence" value="ECO:0007669"/>
    <property type="project" value="Ensembl"/>
</dbReference>
<dbReference type="GO" id="GO:0000977">
    <property type="term" value="F:RNA polymerase II transcription regulatory region sequence-specific DNA binding"/>
    <property type="evidence" value="ECO:0007669"/>
    <property type="project" value="Ensembl"/>
</dbReference>
<dbReference type="GO" id="GO:0009952">
    <property type="term" value="P:anterior/posterior pattern specification"/>
    <property type="evidence" value="ECO:0000316"/>
    <property type="project" value="MGI"/>
</dbReference>
<dbReference type="GO" id="GO:0030326">
    <property type="term" value="P:embryonic limb morphogenesis"/>
    <property type="evidence" value="ECO:0000316"/>
    <property type="project" value="MGI"/>
</dbReference>
<dbReference type="GO" id="GO:0120163">
    <property type="term" value="P:negative regulation of cold-induced thermogenesis"/>
    <property type="evidence" value="ECO:0000250"/>
    <property type="project" value="YuBioLab"/>
</dbReference>
<dbReference type="GO" id="GO:0050905">
    <property type="term" value="P:neuromuscular process"/>
    <property type="evidence" value="ECO:0000316"/>
    <property type="project" value="MGI"/>
</dbReference>
<dbReference type="GO" id="GO:0009954">
    <property type="term" value="P:proximal/distal pattern formation"/>
    <property type="evidence" value="ECO:0000316"/>
    <property type="project" value="MGI"/>
</dbReference>
<dbReference type="GO" id="GO:0001501">
    <property type="term" value="P:skeletal system development"/>
    <property type="evidence" value="ECO:0000316"/>
    <property type="project" value="MGI"/>
</dbReference>
<dbReference type="GO" id="GO:0021520">
    <property type="term" value="P:spinal cord motor neuron cell fate specification"/>
    <property type="evidence" value="ECO:0000316"/>
    <property type="project" value="MGI"/>
</dbReference>
<dbReference type="CDD" id="cd00086">
    <property type="entry name" value="homeodomain"/>
    <property type="match status" value="1"/>
</dbReference>
<dbReference type="FunFam" id="1.10.10.60:FF:000018">
    <property type="entry name" value="Homeobox A10"/>
    <property type="match status" value="1"/>
</dbReference>
<dbReference type="Gene3D" id="1.10.10.60">
    <property type="entry name" value="Homeodomain-like"/>
    <property type="match status" value="1"/>
</dbReference>
<dbReference type="InterPro" id="IPR001356">
    <property type="entry name" value="HD"/>
</dbReference>
<dbReference type="InterPro" id="IPR020479">
    <property type="entry name" value="HD_metazoa"/>
</dbReference>
<dbReference type="InterPro" id="IPR017970">
    <property type="entry name" value="Homeobox_CS"/>
</dbReference>
<dbReference type="InterPro" id="IPR009057">
    <property type="entry name" value="Homeodomain-like_sf"/>
</dbReference>
<dbReference type="InterPro" id="IPR046333">
    <property type="entry name" value="HXA10/ABDB-like"/>
</dbReference>
<dbReference type="PANTHER" id="PTHR45874">
    <property type="entry name" value="HOMEOBOX PROTEIN ABDOMINAL-B"/>
    <property type="match status" value="1"/>
</dbReference>
<dbReference type="PANTHER" id="PTHR45874:SF2">
    <property type="entry name" value="HOMEOBOX PROTEIN HOX-C10"/>
    <property type="match status" value="1"/>
</dbReference>
<dbReference type="Pfam" id="PF00046">
    <property type="entry name" value="Homeodomain"/>
    <property type="match status" value="1"/>
</dbReference>
<dbReference type="PRINTS" id="PR00024">
    <property type="entry name" value="HOMEOBOX"/>
</dbReference>
<dbReference type="SMART" id="SM00389">
    <property type="entry name" value="HOX"/>
    <property type="match status" value="1"/>
</dbReference>
<dbReference type="SUPFAM" id="SSF46689">
    <property type="entry name" value="Homeodomain-like"/>
    <property type="match status" value="1"/>
</dbReference>
<dbReference type="PROSITE" id="PS00027">
    <property type="entry name" value="HOMEOBOX_1"/>
    <property type="match status" value="1"/>
</dbReference>
<dbReference type="PROSITE" id="PS50071">
    <property type="entry name" value="HOMEOBOX_2"/>
    <property type="match status" value="1"/>
</dbReference>
<reference key="1">
    <citation type="journal article" date="1992" name="Mech. Dev.">
        <title>Hox-3.6: isolation and characterization of a new murine homeobox gene located in the 5' region of the Hox-3 cluster.</title>
        <authorList>
            <person name="Peterson R.L."/>
            <person name="Jacobs D.F."/>
            <person name="Awgulewitsch A."/>
        </authorList>
    </citation>
    <scope>NUCLEOTIDE SEQUENCE [GENOMIC DNA]</scope>
    <source>
        <strain>CD-1</strain>
    </source>
</reference>
<reference key="2">
    <citation type="journal article" date="2004" name="Genome Res.">
        <title>The status, quality, and expansion of the NIH full-length cDNA project: the Mammalian Gene Collection (MGC).</title>
        <authorList>
            <consortium name="The MGC Project Team"/>
        </authorList>
    </citation>
    <scope>NUCLEOTIDE SEQUENCE [LARGE SCALE MRNA]</scope>
    <source>
        <strain>C3H/He</strain>
        <tissue>Mesenchymal stem cell</tissue>
    </source>
</reference>
<reference key="3">
    <citation type="journal article" date="1991" name="Proc. Natl. Acad. Sci. U.S.A.">
        <title>Identification of 10 murine homeobox genes.</title>
        <authorList>
            <person name="Singh G."/>
            <person name="Kaur S."/>
            <person name="Stock J.L."/>
            <person name="Jenkins N.A."/>
            <person name="Gilbert D.J."/>
            <person name="Copeland N.G."/>
            <person name="Potter S.S."/>
        </authorList>
    </citation>
    <scope>NUCLEOTIDE SEQUENCE OF 268-327</scope>
</reference>
<reference key="4">
    <citation type="journal article" date="1991" name="Proc. Natl. Acad. Sci. U.S.A.">
        <title>Detection of homeobox genes in development and evolution.</title>
        <authorList>
            <person name="Murtha M.T."/>
            <person name="Leckman J.F."/>
            <person name="Ruddle F.H."/>
        </authorList>
    </citation>
    <scope>NUCLEOTIDE SEQUENCE [GENOMIC DNA] OF 289-313</scope>
</reference>
<gene>
    <name type="primary">Hoxc10</name>
    <name type="synonym">Hox-3.6</name>
    <name type="synonym">Hoxc-10</name>
</gene>
<accession>P31257</accession>
<accession>P31312</accession>
<accession>Q7TMT7</accession>